<sequence length="471" mass="52425">MQSMPWLFRQSLRTGLNLSRTSLPGRSPISPAPISKVHSKTARRNFSVCLRCHFRYQPSLRSDEIKRSTDEKQDKKIEEPVIALGAPESTQAEPNAGAQDTSQTADTVHTQGQEGKKEDEPGSTQNGGLPSYIEDRRSQFSKQFTTWMDNLQSNVFVAGQRLNDLTGYSSIEALKRNIQEQEKRLRAARHRVRTAKEAYAAAINRRSTSQREVNELLQRKHAWSPADLERFTHLYRNDHTNEVAENETQEALSAAERESEEAAASLTKSILSRYHEEQVWSDKIRRMSTWGTWGLMGVNVLLFLIFQIAVEPWRRKRLVKGFEEKVLEAIEKEKILVHSQPVPPVEFTATQDAHSPTSGLVTPSPGDNIASEESSEATVAANTPTTTAEDEASGSMAPENITSSSLESYKPPSLQSLLSSMSIECCRQYIHYLLSESPVTVTQRDISVVAATSAAAGATLMGLVVALIRSQ</sequence>
<protein>
    <recommendedName>
        <fullName>Sensitive to high expression protein 9 homolog, mitochondrial</fullName>
    </recommendedName>
</protein>
<feature type="transit peptide" description="Mitochondrion" evidence="2">
    <location>
        <begin position="1"/>
        <end status="unknown"/>
    </location>
</feature>
<feature type="chain" id="PRO_0000351057" description="Sensitive to high expression protein 9 homolog, mitochondrial">
    <location>
        <begin status="unknown"/>
        <end position="471"/>
    </location>
</feature>
<feature type="topological domain" description="Mitochondrial matrix" evidence="2">
    <location>
        <begin status="unknown"/>
        <end position="289"/>
    </location>
</feature>
<feature type="transmembrane region" description="Helical" evidence="2">
    <location>
        <begin position="290"/>
        <end position="310"/>
    </location>
</feature>
<feature type="topological domain" description="Mitochondrial intermembrane" evidence="2">
    <location>
        <begin position="311"/>
        <end position="447"/>
    </location>
</feature>
<feature type="transmembrane region" description="Helical" evidence="2">
    <location>
        <begin position="448"/>
        <end position="468"/>
    </location>
</feature>
<feature type="topological domain" description="Mitochondrial matrix" evidence="2">
    <location>
        <begin position="469"/>
        <end position="471"/>
    </location>
</feature>
<feature type="region of interest" description="Disordered" evidence="3">
    <location>
        <begin position="84"/>
        <end position="132"/>
    </location>
</feature>
<feature type="region of interest" description="Disordered" evidence="3">
    <location>
        <begin position="347"/>
        <end position="408"/>
    </location>
</feature>
<feature type="coiled-coil region" evidence="2">
    <location>
        <begin position="168"/>
        <end position="269"/>
    </location>
</feature>
<feature type="compositionally biased region" description="Polar residues" evidence="3">
    <location>
        <begin position="88"/>
        <end position="113"/>
    </location>
</feature>
<feature type="compositionally biased region" description="Polar residues" evidence="3">
    <location>
        <begin position="348"/>
        <end position="361"/>
    </location>
</feature>
<feature type="compositionally biased region" description="Low complexity" evidence="3">
    <location>
        <begin position="376"/>
        <end position="387"/>
    </location>
</feature>
<accession>Q5BAW7</accession>
<accession>C8VN62</accession>
<name>SHE9_EMENI</name>
<organism>
    <name type="scientific">Emericella nidulans (strain FGSC A4 / ATCC 38163 / CBS 112.46 / NRRL 194 / M139)</name>
    <name type="common">Aspergillus nidulans</name>
    <dbReference type="NCBI Taxonomy" id="227321"/>
    <lineage>
        <taxon>Eukaryota</taxon>
        <taxon>Fungi</taxon>
        <taxon>Dikarya</taxon>
        <taxon>Ascomycota</taxon>
        <taxon>Pezizomycotina</taxon>
        <taxon>Eurotiomycetes</taxon>
        <taxon>Eurotiomycetidae</taxon>
        <taxon>Eurotiales</taxon>
        <taxon>Aspergillaceae</taxon>
        <taxon>Aspergillus</taxon>
        <taxon>Aspergillus subgen. Nidulantes</taxon>
    </lineage>
</organism>
<gene>
    <name type="primary">she9</name>
    <name type="ORF">AN2313</name>
</gene>
<reference key="1">
    <citation type="journal article" date="2005" name="Nature">
        <title>Sequencing of Aspergillus nidulans and comparative analysis with A. fumigatus and A. oryzae.</title>
        <authorList>
            <person name="Galagan J.E."/>
            <person name="Calvo S.E."/>
            <person name="Cuomo C."/>
            <person name="Ma L.-J."/>
            <person name="Wortman J.R."/>
            <person name="Batzoglou S."/>
            <person name="Lee S.-I."/>
            <person name="Bastuerkmen M."/>
            <person name="Spevak C.C."/>
            <person name="Clutterbuck J."/>
            <person name="Kapitonov V."/>
            <person name="Jurka J."/>
            <person name="Scazzocchio C."/>
            <person name="Farman M.L."/>
            <person name="Butler J."/>
            <person name="Purcell S."/>
            <person name="Harris S."/>
            <person name="Braus G.H."/>
            <person name="Draht O."/>
            <person name="Busch S."/>
            <person name="D'Enfert C."/>
            <person name="Bouchier C."/>
            <person name="Goldman G.H."/>
            <person name="Bell-Pedersen D."/>
            <person name="Griffiths-Jones S."/>
            <person name="Doonan J.H."/>
            <person name="Yu J."/>
            <person name="Vienken K."/>
            <person name="Pain A."/>
            <person name="Freitag M."/>
            <person name="Selker E.U."/>
            <person name="Archer D.B."/>
            <person name="Penalva M.A."/>
            <person name="Oakley B.R."/>
            <person name="Momany M."/>
            <person name="Tanaka T."/>
            <person name="Kumagai T."/>
            <person name="Asai K."/>
            <person name="Machida M."/>
            <person name="Nierman W.C."/>
            <person name="Denning D.W."/>
            <person name="Caddick M.X."/>
            <person name="Hynes M."/>
            <person name="Paoletti M."/>
            <person name="Fischer R."/>
            <person name="Miller B.L."/>
            <person name="Dyer P.S."/>
            <person name="Sachs M.S."/>
            <person name="Osmani S.A."/>
            <person name="Birren B.W."/>
        </authorList>
    </citation>
    <scope>NUCLEOTIDE SEQUENCE [LARGE SCALE GENOMIC DNA]</scope>
    <source>
        <strain>FGSC A4 / ATCC 38163 / CBS 112.46 / NRRL 194 / M139</strain>
    </source>
</reference>
<reference key="2">
    <citation type="journal article" date="2009" name="Fungal Genet. Biol.">
        <title>The 2008 update of the Aspergillus nidulans genome annotation: a community effort.</title>
        <authorList>
            <person name="Wortman J.R."/>
            <person name="Gilsenan J.M."/>
            <person name="Joardar V."/>
            <person name="Deegan J."/>
            <person name="Clutterbuck J."/>
            <person name="Andersen M.R."/>
            <person name="Archer D."/>
            <person name="Bencina M."/>
            <person name="Braus G."/>
            <person name="Coutinho P."/>
            <person name="von Dohren H."/>
            <person name="Doonan J."/>
            <person name="Driessen A.J."/>
            <person name="Durek P."/>
            <person name="Espeso E."/>
            <person name="Fekete E."/>
            <person name="Flipphi M."/>
            <person name="Estrada C.G."/>
            <person name="Geysens S."/>
            <person name="Goldman G."/>
            <person name="de Groot P.W."/>
            <person name="Hansen K."/>
            <person name="Harris S.D."/>
            <person name="Heinekamp T."/>
            <person name="Helmstaedt K."/>
            <person name="Henrissat B."/>
            <person name="Hofmann G."/>
            <person name="Homan T."/>
            <person name="Horio T."/>
            <person name="Horiuchi H."/>
            <person name="James S."/>
            <person name="Jones M."/>
            <person name="Karaffa L."/>
            <person name="Karanyi Z."/>
            <person name="Kato M."/>
            <person name="Keller N."/>
            <person name="Kelly D.E."/>
            <person name="Kiel J.A."/>
            <person name="Kim J.M."/>
            <person name="van der Klei I.J."/>
            <person name="Klis F.M."/>
            <person name="Kovalchuk A."/>
            <person name="Krasevec N."/>
            <person name="Kubicek C.P."/>
            <person name="Liu B."/>
            <person name="Maccabe A."/>
            <person name="Meyer V."/>
            <person name="Mirabito P."/>
            <person name="Miskei M."/>
            <person name="Mos M."/>
            <person name="Mullins J."/>
            <person name="Nelson D.R."/>
            <person name="Nielsen J."/>
            <person name="Oakley B.R."/>
            <person name="Osmani S.A."/>
            <person name="Pakula T."/>
            <person name="Paszewski A."/>
            <person name="Paulsen I."/>
            <person name="Pilsyk S."/>
            <person name="Pocsi I."/>
            <person name="Punt P.J."/>
            <person name="Ram A.F."/>
            <person name="Ren Q."/>
            <person name="Robellet X."/>
            <person name="Robson G."/>
            <person name="Seiboth B."/>
            <person name="van Solingen P."/>
            <person name="Specht T."/>
            <person name="Sun J."/>
            <person name="Taheri-Talesh N."/>
            <person name="Takeshita N."/>
            <person name="Ussery D."/>
            <person name="vanKuyk P.A."/>
            <person name="Visser H."/>
            <person name="van de Vondervoort P.J."/>
            <person name="de Vries R.P."/>
            <person name="Walton J."/>
            <person name="Xiang X."/>
            <person name="Xiong Y."/>
            <person name="Zeng A.P."/>
            <person name="Brandt B.W."/>
            <person name="Cornell M.J."/>
            <person name="van den Hondel C.A."/>
            <person name="Visser J."/>
            <person name="Oliver S.G."/>
            <person name="Turner G."/>
        </authorList>
    </citation>
    <scope>GENOME REANNOTATION</scope>
    <source>
        <strain>FGSC A4 / ATCC 38163 / CBS 112.46 / NRRL 194 / M139</strain>
    </source>
</reference>
<keyword id="KW-0175">Coiled coil</keyword>
<keyword id="KW-0472">Membrane</keyword>
<keyword id="KW-0496">Mitochondrion</keyword>
<keyword id="KW-0999">Mitochondrion inner membrane</keyword>
<keyword id="KW-1185">Reference proteome</keyword>
<keyword id="KW-0809">Transit peptide</keyword>
<keyword id="KW-0812">Transmembrane</keyword>
<keyword id="KW-1133">Transmembrane helix</keyword>
<proteinExistence type="inferred from homology"/>
<dbReference type="EMBL" id="AACD01000038">
    <property type="protein sequence ID" value="EAA64424.1"/>
    <property type="molecule type" value="Genomic_DNA"/>
</dbReference>
<dbReference type="EMBL" id="BN001307">
    <property type="protein sequence ID" value="CBF86588.1"/>
    <property type="molecule type" value="Genomic_DNA"/>
</dbReference>
<dbReference type="RefSeq" id="XP_659917.1">
    <property type="nucleotide sequence ID" value="XM_654825.1"/>
</dbReference>
<dbReference type="SMR" id="Q5BAW7"/>
<dbReference type="EnsemblFungi" id="CBF86588">
    <property type="protein sequence ID" value="CBF86588"/>
    <property type="gene ID" value="ANIA_02313"/>
</dbReference>
<dbReference type="KEGG" id="ani:ANIA_02313"/>
<dbReference type="VEuPathDB" id="FungiDB:AN2313"/>
<dbReference type="eggNOG" id="ENOG502QQ1E">
    <property type="taxonomic scope" value="Eukaryota"/>
</dbReference>
<dbReference type="HOGENOM" id="CLU_025632_2_0_1"/>
<dbReference type="InParanoid" id="Q5BAW7"/>
<dbReference type="OMA" id="ERYMALI"/>
<dbReference type="OrthoDB" id="5595506at2759"/>
<dbReference type="Proteomes" id="UP000000560">
    <property type="component" value="Chromosome VII"/>
</dbReference>
<dbReference type="GO" id="GO:0005743">
    <property type="term" value="C:mitochondrial inner membrane"/>
    <property type="evidence" value="ECO:0000318"/>
    <property type="project" value="GO_Central"/>
</dbReference>
<dbReference type="GO" id="GO:0007007">
    <property type="term" value="P:inner mitochondrial membrane organization"/>
    <property type="evidence" value="ECO:0000318"/>
    <property type="project" value="GO_Central"/>
</dbReference>
<dbReference type="InterPro" id="IPR008839">
    <property type="entry name" value="MDM33_fungi"/>
</dbReference>
<dbReference type="PANTHER" id="PTHR31961">
    <property type="entry name" value="SENSITIVE TO HIGH EXPRESSION PROTEIN 9, MITOCHONDRIAL"/>
    <property type="match status" value="1"/>
</dbReference>
<dbReference type="PANTHER" id="PTHR31961:SF3">
    <property type="entry name" value="SENSITIVE TO HIGH EXPRESSION PROTEIN 9, MITOCHONDRIAL"/>
    <property type="match status" value="1"/>
</dbReference>
<dbReference type="Pfam" id="PF05546">
    <property type="entry name" value="She9_MDM33"/>
    <property type="match status" value="1"/>
</dbReference>
<evidence type="ECO:0000250" key="1"/>
<evidence type="ECO:0000255" key="2"/>
<evidence type="ECO:0000256" key="3">
    <source>
        <dbReference type="SAM" id="MobiDB-lite"/>
    </source>
</evidence>
<evidence type="ECO:0000305" key="4"/>
<comment type="function">
    <text evidence="1">Required for the maintenance of the structure of the mitochondrial inner membrane. Involved in mitochondrial morphology. Causes growth arrest when highly overexpressed (By similarity).</text>
</comment>
<comment type="subunit">
    <text evidence="1">Homooligomer.</text>
</comment>
<comment type="subcellular location">
    <subcellularLocation>
        <location evidence="1">Mitochondrion inner membrane</location>
        <topology evidence="1">Multi-pass membrane protein</topology>
    </subcellularLocation>
</comment>
<comment type="similarity">
    <text evidence="4">Belongs to the SHE9 family.</text>
</comment>